<protein>
    <recommendedName>
        <fullName>Cyclic di-GMP phosphodiesterase PdeB</fullName>
        <ecNumber>3.1.4.52</ecNumber>
    </recommendedName>
    <alternativeName>
        <fullName>Phosphodiesterase biofilm protein</fullName>
    </alternativeName>
</protein>
<accession>Q8EJM6</accession>
<reference key="1">
    <citation type="journal article" date="2002" name="Nat. Biotechnol.">
        <title>Genome sequence of the dissimilatory metal ion-reducing bacterium Shewanella oneidensis.</title>
        <authorList>
            <person name="Heidelberg J.F."/>
            <person name="Paulsen I.T."/>
            <person name="Nelson K.E."/>
            <person name="Gaidos E.J."/>
            <person name="Nelson W.C."/>
            <person name="Read T.D."/>
            <person name="Eisen J.A."/>
            <person name="Seshadri R."/>
            <person name="Ward N.L."/>
            <person name="Methe B.A."/>
            <person name="Clayton R.A."/>
            <person name="Meyer T."/>
            <person name="Tsapin A."/>
            <person name="Scott J."/>
            <person name="Beanan M.J."/>
            <person name="Brinkac L.M."/>
            <person name="Daugherty S.C."/>
            <person name="DeBoy R.T."/>
            <person name="Dodson R.J."/>
            <person name="Durkin A.S."/>
            <person name="Haft D.H."/>
            <person name="Kolonay J.F."/>
            <person name="Madupu R."/>
            <person name="Peterson J.D."/>
            <person name="Umayam L.A."/>
            <person name="White O."/>
            <person name="Wolf A.M."/>
            <person name="Vamathevan J.J."/>
            <person name="Weidman J.F."/>
            <person name="Impraim M."/>
            <person name="Lee K."/>
            <person name="Berry K.J."/>
            <person name="Lee C."/>
            <person name="Mueller J."/>
            <person name="Khouri H.M."/>
            <person name="Gill J."/>
            <person name="Utterback T.R."/>
            <person name="McDonald L.A."/>
            <person name="Feldblyum T.V."/>
            <person name="Smith H.O."/>
            <person name="Venter J.C."/>
            <person name="Nealson K.H."/>
            <person name="Fraser C.M."/>
        </authorList>
    </citation>
    <scope>NUCLEOTIDE SEQUENCE [LARGE SCALE GENOMIC DNA]</scope>
    <source>
        <strain>ATCC 700550 / JCM 31522 / CIP 106686 / LMG 19005 / NCIMB 14063 / MR-1</strain>
    </source>
</reference>
<reference key="2">
    <citation type="journal article" date="2013" name="J. Bacteriol.">
        <title>PdeB, a cyclic di-GMP-specific phosphodiesterase that regulates Shewanella oneidensis MR-1 motility and biofilm formation.</title>
        <authorList>
            <person name="Chao L."/>
            <person name="Rakshe S."/>
            <person name="Leff M."/>
            <person name="Spormann A.M."/>
        </authorList>
    </citation>
    <scope>FUNCTION</scope>
    <scope>CATALYTIC ACTIVITY</scope>
    <scope>DISRUPTION PHENOTYPE</scope>
    <scope>GENE NAME</scope>
    <scope>MUTAGENESIS OF GLU-634</scope>
    <source>
        <strain>ATCC 700550 / JCM 31522 / CIP 106686 / LMG 19005 / NCIMB 14063 / MR-1</strain>
    </source>
</reference>
<proteinExistence type="evidence at protein level"/>
<sequence>MRIGNKILVFIVGFCLPAVVLVSYCLGVWFDHRVELLRQDNVRHELANIQQQFRIDVDRLGFLTNIYASPLSHLDSEQLKSLESSWLESSMSGNLSWFILRDGNLQNVFQNEQPIAEANRQEIAKAITTQAKPEFASAYLIGDKGYVVTAVASHLGEYVLLVRQLTERDLLEYAQTSLVARVSMSNVVTAHHSSHSSSVALPSLISQQPIYLHVEFSDDPFRDVKLSLDWVSLAVILLGILIVALGYVWLRACLLQPFKSLMQQLALVDPMASVYRPVTSEGNEELSVLANRVNSLLARIYQQKERGKITLESIAEAVILTDIEAKVIYMNPKAETLLEVASSNAVGESLASLLKAGEQLNQAVFHCIRLGETMPQVAKIKLLTTMPRIIERSISNVLNHEKEIVGTVVVLRDITQEELLKHQLQKRANFDGITGLLNRQAFEEQLPEFASQARSLAVCYLDLEQFKLINDSCGHTAGDRMLAMVARAIQSCLGPQELLARIGGDEFGLVICDRTALAVAQLLKQIIAQVSLQVLHDKNCNYKVGLSIGVAFGRAPYINAQELLKDADIACIAAKAKGTNQIHIYDDKDKELTYQRNAPKWAVRIAQAIEENELLLYYQPIRGLGASSKRQRMEVLLRIQEPCGRILAPAQFIAAAERFKLMPEIDKEVIRKAFLWLSLNSQLWQDHCISINLSGNSLGAEGMVEYIAKQQQIFDIPSQCVCFEITETTAIQNRHRGMEMLRQLRKLGFSFALDDFGSGFASYGYLRELPVDYVKIDGCFVKNLAVNAKDYAIVKSIQDVCRVMGIETVAEFVENQEIIDRLQTIGINYAQGYAIGRPQPLASYCEQFETRLAQRA</sequence>
<name>PDEB_SHEON</name>
<comment type="function">
    <text evidence="5">Affects motility and biofilm formation, and is linked to the regulation of sulfate uptake and assimilation.</text>
</comment>
<comment type="catalytic activity">
    <reaction evidence="5">
        <text>3',3'-c-di-GMP + H2O = 5'-phosphoguanylyl(3'-&gt;5')guanosine + H(+)</text>
        <dbReference type="Rhea" id="RHEA:24902"/>
        <dbReference type="ChEBI" id="CHEBI:15377"/>
        <dbReference type="ChEBI" id="CHEBI:15378"/>
        <dbReference type="ChEBI" id="CHEBI:58754"/>
        <dbReference type="ChEBI" id="CHEBI:58805"/>
        <dbReference type="EC" id="3.1.4.52"/>
    </reaction>
</comment>
<comment type="subcellular location">
    <subcellularLocation>
        <location evidence="6">Cell membrane</location>
        <topology evidence="6">Multi-pass membrane protein</topology>
    </subcellularLocation>
</comment>
<comment type="disruption phenotype">
    <text evidence="5">Deletion mutant shows decreased swimming motility and increased biofilm formation under rich growth medium conditions.</text>
</comment>
<dbReference type="EC" id="3.1.4.52"/>
<dbReference type="EMBL" id="AE014299">
    <property type="protein sequence ID" value="AAN53519.1"/>
    <property type="molecule type" value="Genomic_DNA"/>
</dbReference>
<dbReference type="RefSeq" id="NP_716074.1">
    <property type="nucleotide sequence ID" value="NC_004347.2"/>
</dbReference>
<dbReference type="RefSeq" id="WP_011070793.1">
    <property type="nucleotide sequence ID" value="NC_004347.2"/>
</dbReference>
<dbReference type="SMR" id="Q8EJM6"/>
<dbReference type="STRING" id="211586.SO_0437"/>
<dbReference type="PaxDb" id="211586-SO_0437"/>
<dbReference type="KEGG" id="son:SO_0437"/>
<dbReference type="PATRIC" id="fig|211586.12.peg.426"/>
<dbReference type="eggNOG" id="COG5001">
    <property type="taxonomic scope" value="Bacteria"/>
</dbReference>
<dbReference type="eggNOG" id="COG5002">
    <property type="taxonomic scope" value="Bacteria"/>
</dbReference>
<dbReference type="HOGENOM" id="CLU_000445_79_0_6"/>
<dbReference type="OrthoDB" id="9816034at2"/>
<dbReference type="PhylomeDB" id="Q8EJM6"/>
<dbReference type="BioCyc" id="SONE211586:G1GMP-418-MONOMER"/>
<dbReference type="BRENDA" id="3.1.4.52">
    <property type="organism ID" value="5706"/>
</dbReference>
<dbReference type="Proteomes" id="UP000008186">
    <property type="component" value="Chromosome"/>
</dbReference>
<dbReference type="GO" id="GO:0005886">
    <property type="term" value="C:plasma membrane"/>
    <property type="evidence" value="ECO:0000318"/>
    <property type="project" value="GO_Central"/>
</dbReference>
<dbReference type="GO" id="GO:0071111">
    <property type="term" value="F:cyclic-guanylate-specific phosphodiesterase activity"/>
    <property type="evidence" value="ECO:0000318"/>
    <property type="project" value="GO_Central"/>
</dbReference>
<dbReference type="GO" id="GO:1900190">
    <property type="term" value="P:regulation of single-species biofilm formation"/>
    <property type="evidence" value="ECO:0000318"/>
    <property type="project" value="GO_Central"/>
</dbReference>
<dbReference type="CDD" id="cd01948">
    <property type="entry name" value="EAL"/>
    <property type="match status" value="1"/>
</dbReference>
<dbReference type="CDD" id="cd01949">
    <property type="entry name" value="GGDEF"/>
    <property type="match status" value="1"/>
</dbReference>
<dbReference type="CDD" id="cd00130">
    <property type="entry name" value="PAS"/>
    <property type="match status" value="1"/>
</dbReference>
<dbReference type="Gene3D" id="3.30.70.270">
    <property type="match status" value="1"/>
</dbReference>
<dbReference type="Gene3D" id="3.20.20.450">
    <property type="entry name" value="EAL domain"/>
    <property type="match status" value="1"/>
</dbReference>
<dbReference type="Gene3D" id="3.30.450.20">
    <property type="entry name" value="PAS domain"/>
    <property type="match status" value="1"/>
</dbReference>
<dbReference type="InterPro" id="IPR050706">
    <property type="entry name" value="Cyclic-di-GMP_PDE-like"/>
</dbReference>
<dbReference type="InterPro" id="IPR001633">
    <property type="entry name" value="EAL_dom"/>
</dbReference>
<dbReference type="InterPro" id="IPR035919">
    <property type="entry name" value="EAL_sf"/>
</dbReference>
<dbReference type="InterPro" id="IPR000160">
    <property type="entry name" value="GGDEF_dom"/>
</dbReference>
<dbReference type="InterPro" id="IPR029787">
    <property type="entry name" value="Nucleotide_cyclase"/>
</dbReference>
<dbReference type="InterPro" id="IPR000014">
    <property type="entry name" value="PAS"/>
</dbReference>
<dbReference type="InterPro" id="IPR035965">
    <property type="entry name" value="PAS-like_dom_sf"/>
</dbReference>
<dbReference type="InterPro" id="IPR013656">
    <property type="entry name" value="PAS_4"/>
</dbReference>
<dbReference type="InterPro" id="IPR043128">
    <property type="entry name" value="Rev_trsase/Diguanyl_cyclase"/>
</dbReference>
<dbReference type="NCBIfam" id="TIGR00254">
    <property type="entry name" value="GGDEF"/>
    <property type="match status" value="1"/>
</dbReference>
<dbReference type="PANTHER" id="PTHR33121:SF23">
    <property type="entry name" value="CYCLIC DI-GMP PHOSPHODIESTERASE PDEB"/>
    <property type="match status" value="1"/>
</dbReference>
<dbReference type="PANTHER" id="PTHR33121">
    <property type="entry name" value="CYCLIC DI-GMP PHOSPHODIESTERASE PDEF"/>
    <property type="match status" value="1"/>
</dbReference>
<dbReference type="Pfam" id="PF00563">
    <property type="entry name" value="EAL"/>
    <property type="match status" value="1"/>
</dbReference>
<dbReference type="Pfam" id="PF00990">
    <property type="entry name" value="GGDEF"/>
    <property type="match status" value="1"/>
</dbReference>
<dbReference type="Pfam" id="PF08448">
    <property type="entry name" value="PAS_4"/>
    <property type="match status" value="1"/>
</dbReference>
<dbReference type="SMART" id="SM00052">
    <property type="entry name" value="EAL"/>
    <property type="match status" value="1"/>
</dbReference>
<dbReference type="SMART" id="SM00267">
    <property type="entry name" value="GGDEF"/>
    <property type="match status" value="1"/>
</dbReference>
<dbReference type="SMART" id="SM00091">
    <property type="entry name" value="PAS"/>
    <property type="match status" value="1"/>
</dbReference>
<dbReference type="SUPFAM" id="SSF141868">
    <property type="entry name" value="EAL domain-like"/>
    <property type="match status" value="1"/>
</dbReference>
<dbReference type="SUPFAM" id="SSF55073">
    <property type="entry name" value="Nucleotide cyclase"/>
    <property type="match status" value="1"/>
</dbReference>
<dbReference type="SUPFAM" id="SSF55785">
    <property type="entry name" value="PYP-like sensor domain (PAS domain)"/>
    <property type="match status" value="1"/>
</dbReference>
<dbReference type="PROSITE" id="PS50883">
    <property type="entry name" value="EAL"/>
    <property type="match status" value="1"/>
</dbReference>
<dbReference type="PROSITE" id="PS50887">
    <property type="entry name" value="GGDEF"/>
    <property type="match status" value="1"/>
</dbReference>
<dbReference type="PROSITE" id="PS50112">
    <property type="entry name" value="PAS"/>
    <property type="match status" value="1"/>
</dbReference>
<gene>
    <name type="primary">pdeB</name>
    <name type="ordered locus">SO_0437</name>
</gene>
<evidence type="ECO:0000255" key="1"/>
<evidence type="ECO:0000255" key="2">
    <source>
        <dbReference type="PROSITE-ProRule" id="PRU00074"/>
    </source>
</evidence>
<evidence type="ECO:0000255" key="3">
    <source>
        <dbReference type="PROSITE-ProRule" id="PRU00095"/>
    </source>
</evidence>
<evidence type="ECO:0000255" key="4">
    <source>
        <dbReference type="PROSITE-ProRule" id="PRU00140"/>
    </source>
</evidence>
<evidence type="ECO:0000269" key="5">
    <source>
    </source>
</evidence>
<evidence type="ECO:0000305" key="6"/>
<keyword id="KW-0973">c-di-GMP</keyword>
<keyword id="KW-1003">Cell membrane</keyword>
<keyword id="KW-0378">Hydrolase</keyword>
<keyword id="KW-0472">Membrane</keyword>
<keyword id="KW-1185">Reference proteome</keyword>
<keyword id="KW-0812">Transmembrane</keyword>
<keyword id="KW-1133">Transmembrane helix</keyword>
<feature type="chain" id="PRO_0000429746" description="Cyclic di-GMP phosphodiesterase PdeB">
    <location>
        <begin position="1"/>
        <end position="856"/>
    </location>
</feature>
<feature type="transmembrane region" description="Helical" evidence="1">
    <location>
        <begin position="7"/>
        <end position="27"/>
    </location>
</feature>
<feature type="transmembrane region" description="Helical" evidence="1">
    <location>
        <begin position="230"/>
        <end position="250"/>
    </location>
</feature>
<feature type="domain" description="PAS" evidence="4">
    <location>
        <begin position="303"/>
        <end position="350"/>
    </location>
</feature>
<feature type="domain" description="GGDEF" evidence="3">
    <location>
        <begin position="454"/>
        <end position="587"/>
    </location>
</feature>
<feature type="domain" description="EAL" evidence="2">
    <location>
        <begin position="598"/>
        <end position="852"/>
    </location>
</feature>
<feature type="mutagenesis site" description="Lack of activity." evidence="5">
    <original>E</original>
    <variation>A</variation>
    <location>
        <position position="634"/>
    </location>
</feature>
<organism>
    <name type="scientific">Shewanella oneidensis (strain ATCC 700550 / JCM 31522 / CIP 106686 / LMG 19005 / NCIMB 14063 / MR-1)</name>
    <dbReference type="NCBI Taxonomy" id="211586"/>
    <lineage>
        <taxon>Bacteria</taxon>
        <taxon>Pseudomonadati</taxon>
        <taxon>Pseudomonadota</taxon>
        <taxon>Gammaproteobacteria</taxon>
        <taxon>Alteromonadales</taxon>
        <taxon>Shewanellaceae</taxon>
        <taxon>Shewanella</taxon>
    </lineage>
</organism>